<protein>
    <recommendedName>
        <fullName evidence="1">Acetyl-coenzyme A carboxylase carboxyl transferase subunit alpha</fullName>
        <shortName evidence="1">ACCase subunit alpha</shortName>
        <shortName evidence="1">Acetyl-CoA carboxylase carboxyltransferase subunit alpha</shortName>
        <ecNumber evidence="1">2.1.3.15</ecNumber>
    </recommendedName>
</protein>
<keyword id="KW-0067">ATP-binding</keyword>
<keyword id="KW-0963">Cytoplasm</keyword>
<keyword id="KW-0275">Fatty acid biosynthesis</keyword>
<keyword id="KW-0276">Fatty acid metabolism</keyword>
<keyword id="KW-0444">Lipid biosynthesis</keyword>
<keyword id="KW-0443">Lipid metabolism</keyword>
<keyword id="KW-0547">Nucleotide-binding</keyword>
<keyword id="KW-1185">Reference proteome</keyword>
<keyword id="KW-0808">Transferase</keyword>
<name>ACCA_NITWN</name>
<gene>
    <name evidence="1" type="primary">accA</name>
    <name type="ordered locus">Nwi_0392</name>
</gene>
<evidence type="ECO:0000255" key="1">
    <source>
        <dbReference type="HAMAP-Rule" id="MF_00823"/>
    </source>
</evidence>
<evidence type="ECO:0000255" key="2">
    <source>
        <dbReference type="PROSITE-ProRule" id="PRU01137"/>
    </source>
</evidence>
<sequence>MPDPMRSYLDFEKPVAELDSKIDELRALAASGSDISEEISSIEEKAAQALKDLYANLTPWQKTQVARHPQRPHFSDFVKGLITEFTPLAGDRKFGEDEALIGGFGRFRGESICVIGQEKGATTESRLKHNFGMARPEGYRKAVRLMDMADRFDIPVLSLVDSAGAYPGIGAEERGQAEAIARSTDACLSLGVANIAVIIGEGGSGGAIAIATANRVLMLEHAIYSVISPEAASSILWRDSSKAQEAATNMKITAQDLLRFGVIDAILKEPAGGAHRDPAAVIALTGDAIAGALNDLRNLDRDSLRQQRRQKFIDIGRKLG</sequence>
<reference key="1">
    <citation type="journal article" date="2006" name="Appl. Environ. Microbiol.">
        <title>Genome sequence of the chemolithoautotrophic nitrite-oxidizing bacterium Nitrobacter winogradskyi Nb-255.</title>
        <authorList>
            <person name="Starkenburg S.R."/>
            <person name="Chain P.S.G."/>
            <person name="Sayavedra-Soto L.A."/>
            <person name="Hauser L."/>
            <person name="Land M.L."/>
            <person name="Larimer F.W."/>
            <person name="Malfatti S.A."/>
            <person name="Klotz M.G."/>
            <person name="Bottomley P.J."/>
            <person name="Arp D.J."/>
            <person name="Hickey W.J."/>
        </authorList>
    </citation>
    <scope>NUCLEOTIDE SEQUENCE [LARGE SCALE GENOMIC DNA]</scope>
    <source>
        <strain>ATCC 25391 / DSM 10237 / CIP 104748 / NCIMB 11846 / Nb-255</strain>
    </source>
</reference>
<dbReference type="EC" id="2.1.3.15" evidence="1"/>
<dbReference type="EMBL" id="CP000115">
    <property type="protein sequence ID" value="ABA03659.1"/>
    <property type="molecule type" value="Genomic_DNA"/>
</dbReference>
<dbReference type="RefSeq" id="WP_011313723.1">
    <property type="nucleotide sequence ID" value="NC_007406.1"/>
</dbReference>
<dbReference type="SMR" id="Q3SVN2"/>
<dbReference type="STRING" id="323098.Nwi_0392"/>
<dbReference type="KEGG" id="nwi:Nwi_0392"/>
<dbReference type="eggNOG" id="COG0825">
    <property type="taxonomic scope" value="Bacteria"/>
</dbReference>
<dbReference type="HOGENOM" id="CLU_015486_0_2_5"/>
<dbReference type="OrthoDB" id="9808023at2"/>
<dbReference type="UniPathway" id="UPA00655">
    <property type="reaction ID" value="UER00711"/>
</dbReference>
<dbReference type="Proteomes" id="UP000002531">
    <property type="component" value="Chromosome"/>
</dbReference>
<dbReference type="GO" id="GO:0009317">
    <property type="term" value="C:acetyl-CoA carboxylase complex"/>
    <property type="evidence" value="ECO:0007669"/>
    <property type="project" value="InterPro"/>
</dbReference>
<dbReference type="GO" id="GO:0003989">
    <property type="term" value="F:acetyl-CoA carboxylase activity"/>
    <property type="evidence" value="ECO:0007669"/>
    <property type="project" value="InterPro"/>
</dbReference>
<dbReference type="GO" id="GO:0005524">
    <property type="term" value="F:ATP binding"/>
    <property type="evidence" value="ECO:0007669"/>
    <property type="project" value="UniProtKB-KW"/>
</dbReference>
<dbReference type="GO" id="GO:0016743">
    <property type="term" value="F:carboxyl- or carbamoyltransferase activity"/>
    <property type="evidence" value="ECO:0007669"/>
    <property type="project" value="UniProtKB-UniRule"/>
</dbReference>
<dbReference type="GO" id="GO:0006633">
    <property type="term" value="P:fatty acid biosynthetic process"/>
    <property type="evidence" value="ECO:0007669"/>
    <property type="project" value="UniProtKB-KW"/>
</dbReference>
<dbReference type="GO" id="GO:2001295">
    <property type="term" value="P:malonyl-CoA biosynthetic process"/>
    <property type="evidence" value="ECO:0007669"/>
    <property type="project" value="UniProtKB-UniRule"/>
</dbReference>
<dbReference type="Gene3D" id="3.90.226.10">
    <property type="entry name" value="2-enoyl-CoA Hydratase, Chain A, domain 1"/>
    <property type="match status" value="1"/>
</dbReference>
<dbReference type="HAMAP" id="MF_00823">
    <property type="entry name" value="AcetylCoA_CT_alpha"/>
    <property type="match status" value="1"/>
</dbReference>
<dbReference type="InterPro" id="IPR001095">
    <property type="entry name" value="Acetyl_CoA_COase_a_su"/>
</dbReference>
<dbReference type="InterPro" id="IPR029045">
    <property type="entry name" value="ClpP/crotonase-like_dom_sf"/>
</dbReference>
<dbReference type="InterPro" id="IPR011763">
    <property type="entry name" value="COA_CT_C"/>
</dbReference>
<dbReference type="NCBIfam" id="TIGR00513">
    <property type="entry name" value="accA"/>
    <property type="match status" value="1"/>
</dbReference>
<dbReference type="NCBIfam" id="NF041504">
    <property type="entry name" value="AccA_sub"/>
    <property type="match status" value="1"/>
</dbReference>
<dbReference type="NCBIfam" id="NF004344">
    <property type="entry name" value="PRK05724.1"/>
    <property type="match status" value="1"/>
</dbReference>
<dbReference type="PANTHER" id="PTHR42853">
    <property type="entry name" value="ACETYL-COENZYME A CARBOXYLASE CARBOXYL TRANSFERASE SUBUNIT ALPHA"/>
    <property type="match status" value="1"/>
</dbReference>
<dbReference type="PANTHER" id="PTHR42853:SF3">
    <property type="entry name" value="ACETYL-COENZYME A CARBOXYLASE CARBOXYL TRANSFERASE SUBUNIT ALPHA, CHLOROPLASTIC"/>
    <property type="match status" value="1"/>
</dbReference>
<dbReference type="Pfam" id="PF03255">
    <property type="entry name" value="ACCA"/>
    <property type="match status" value="1"/>
</dbReference>
<dbReference type="PRINTS" id="PR01069">
    <property type="entry name" value="ACCCTRFRASEA"/>
</dbReference>
<dbReference type="SUPFAM" id="SSF52096">
    <property type="entry name" value="ClpP/crotonase"/>
    <property type="match status" value="1"/>
</dbReference>
<dbReference type="PROSITE" id="PS50989">
    <property type="entry name" value="COA_CT_CTER"/>
    <property type="match status" value="1"/>
</dbReference>
<feature type="chain" id="PRO_0000223791" description="Acetyl-coenzyme A carboxylase carboxyl transferase subunit alpha">
    <location>
        <begin position="1"/>
        <end position="320"/>
    </location>
</feature>
<feature type="domain" description="CoA carboxyltransferase C-terminal" evidence="2">
    <location>
        <begin position="41"/>
        <end position="295"/>
    </location>
</feature>
<organism>
    <name type="scientific">Nitrobacter winogradskyi (strain ATCC 25391 / DSM 10237 / CIP 104748 / NCIMB 11846 / Nb-255)</name>
    <dbReference type="NCBI Taxonomy" id="323098"/>
    <lineage>
        <taxon>Bacteria</taxon>
        <taxon>Pseudomonadati</taxon>
        <taxon>Pseudomonadota</taxon>
        <taxon>Alphaproteobacteria</taxon>
        <taxon>Hyphomicrobiales</taxon>
        <taxon>Nitrobacteraceae</taxon>
        <taxon>Nitrobacter</taxon>
    </lineage>
</organism>
<comment type="function">
    <text evidence="1">Component of the acetyl coenzyme A carboxylase (ACC) complex. First, biotin carboxylase catalyzes the carboxylation of biotin on its carrier protein (BCCP) and then the CO(2) group is transferred by the carboxyltransferase to acetyl-CoA to form malonyl-CoA.</text>
</comment>
<comment type="catalytic activity">
    <reaction evidence="1">
        <text>N(6)-carboxybiotinyl-L-lysyl-[protein] + acetyl-CoA = N(6)-biotinyl-L-lysyl-[protein] + malonyl-CoA</text>
        <dbReference type="Rhea" id="RHEA:54728"/>
        <dbReference type="Rhea" id="RHEA-COMP:10505"/>
        <dbReference type="Rhea" id="RHEA-COMP:10506"/>
        <dbReference type="ChEBI" id="CHEBI:57288"/>
        <dbReference type="ChEBI" id="CHEBI:57384"/>
        <dbReference type="ChEBI" id="CHEBI:83144"/>
        <dbReference type="ChEBI" id="CHEBI:83145"/>
        <dbReference type="EC" id="2.1.3.15"/>
    </reaction>
</comment>
<comment type="pathway">
    <text evidence="1">Lipid metabolism; malonyl-CoA biosynthesis; malonyl-CoA from acetyl-CoA: step 1/1.</text>
</comment>
<comment type="subunit">
    <text evidence="1">Acetyl-CoA carboxylase is a heterohexamer composed of biotin carboxyl carrier protein (AccB), biotin carboxylase (AccC) and two subunits each of ACCase subunit alpha (AccA) and ACCase subunit beta (AccD).</text>
</comment>
<comment type="subcellular location">
    <subcellularLocation>
        <location evidence="1">Cytoplasm</location>
    </subcellularLocation>
</comment>
<comment type="similarity">
    <text evidence="1">Belongs to the AccA family.</text>
</comment>
<accession>Q3SVN2</accession>
<proteinExistence type="inferred from homology"/>